<sequence>MEELIKAPNSNFIIMSNQPYQTTSPEIVEDYIIKRGQPFVLTGTTQGWSRSNMFTLDFLSERYSEMELINSPRNNETHTDLQGWRMKDFISYLQVSPEERNPKHLYGKDIACPREWQEYLSHKLQPQYSYKSRFDLVSHLPDYLQPETLLVYIGSNGTYTPGHIDMCGSLSQNLMVSSDQDAFAWWFIVPTEYKDEALKFWGDKGGDVYNESRFIRPIDLLGAPFPIYVFKQRPGDFIFVPPDSVHQVVNCGPGISTKVAWNSISLKSLPISYFSSLPHTRRMAKPELFRIKAIAYYTLRKIMGDVENTNFNTIDVNDVIDIIAPLLEIFHNILQTESILIPKPNYPYCNGETIPFLQPFKYFNGDRIQDRRCDHCNSDIFNRCYHCETCKTDDGQGKDFCFDCVSSGIGCEFHFKVMVLKEFISHSKLKKELSSFYEIYKNLLAHSGRRPKEVDDIITKSTDRVSDECGFLTTATVAYHVVFYSSQKKIKCHRCEKRFKKFSIIFCTNCNARFCEQCVVNTFGQNFQVLMKRNEWECFCCKGLCDCSNCTSNSNSSNHPRILNNNQQLGLPYNNNNNSNNNNNNNINNNNNNNNNNINNNNNNMNNNNSINNNNNNNNNNNINNNNINNNNHHNNNGNNNLNSSYSSLNALSSLSQQQSYGSYDNYNNNNNNNNYNNNNNNNGHIQILKSGRQYDDEQSSSSGSGSSNSTPTKPRPRNGGDDGLMSHFSGNNNNNNNHHNNNNNNNNNHHMMSHHHHNNNNNNNNNNNPTTSSLSSLSTSLSSSSTSTQKPMDVHSKKRPIVLDNDKPKGRPPKNLKEWTSTHKFIISLIELFRSSNNAILGKPNPHYKPIENLPPLVQLYLSQRKAFGGVLWAKTNSCPLLPCIWVKDLSVIPPNTKLLPSLIQGKKIVVLFFGDQDQEEYVGIVGKKSIFSFDEVNQTLLLKCGEVPLAQLEDLFNTTEPEIAMKKDIAAFNYKNQIEEKEEGLYVKQELYNNKKII</sequence>
<protein>
    <recommendedName>
        <fullName evidence="14 17">C-module-binding factor A</fullName>
    </recommendedName>
</protein>
<accession>O97101</accession>
<accession>Q54WK2</accession>
<evidence type="ECO:0000255" key="1">
    <source>
        <dbReference type="PROSITE-ProRule" id="PRU00146"/>
    </source>
</evidence>
<evidence type="ECO:0000255" key="2">
    <source>
        <dbReference type="PROSITE-ProRule" id="PRU00175"/>
    </source>
</evidence>
<evidence type="ECO:0000255" key="3">
    <source>
        <dbReference type="PROSITE-ProRule" id="PRU00538"/>
    </source>
</evidence>
<evidence type="ECO:0000256" key="4">
    <source>
        <dbReference type="SAM" id="MobiDB-lite"/>
    </source>
</evidence>
<evidence type="ECO:0000269" key="5">
    <source>
    </source>
</evidence>
<evidence type="ECO:0000269" key="6">
    <source>
    </source>
</evidence>
<evidence type="ECO:0000269" key="7">
    <source>
    </source>
</evidence>
<evidence type="ECO:0000269" key="8">
    <source>
    </source>
</evidence>
<evidence type="ECO:0000269" key="9">
    <source>
    </source>
</evidence>
<evidence type="ECO:0000269" key="10">
    <source>
    </source>
</evidence>
<evidence type="ECO:0000269" key="11">
    <source>
    </source>
</evidence>
<evidence type="ECO:0000269" key="12">
    <source>
    </source>
</evidence>
<evidence type="ECO:0000269" key="13">
    <source>
    </source>
</evidence>
<evidence type="ECO:0000303" key="14">
    <source>
    </source>
</evidence>
<evidence type="ECO:0000303" key="15">
    <source>
    </source>
</evidence>
<evidence type="ECO:0000305" key="16">
    <source>
    </source>
</evidence>
<evidence type="ECO:0000312" key="17">
    <source>
        <dbReference type="EMBL" id="AAD17489.2"/>
    </source>
</evidence>
<evidence type="ECO:0000312" key="18">
    <source>
        <dbReference type="EMBL" id="EAL67643.1"/>
    </source>
</evidence>
<comment type="function">
    <text evidence="5 6 7 8 9 10 11 12 13">Transcriptional regulator involved in phagocytosis and pinocytosis. Both activates and represses transcription. Regulates expression of acaA, carA, pkaC, csaA, cotB and lagC (PubMed:11162086, PubMed:15470262, PubMed:16607013, PubMed:19343174, PubMed:23355006, PubMed:26339297). Promotes amplification of the tRNA gene-associated retrotransposon TRE5-A, a mobile genetic element formerly called as Dictyostelium repetitive element (DRE). Suppresses agnC and agnE encoding argonaute proteins which are part of a RNA interference pathway controlling TRE5-A amplification. Required for amplification of both sense and antisense RNA transcripts, but does not activate their promoters found in A-module and C-module of the TRE5-A, respectively (PubMed:21076008, PubMed:26339297). Nevertheless, binds to distinct DNA sequences containing A and T stretches within the C-module in vitro (PubMed:10491202, PubMed:11162086, PubMed:8898890).</text>
</comment>
<comment type="subunit">
    <text evidence="13">Monomer.</text>
</comment>
<comment type="subcellular location">
    <subcellularLocation>
        <location evidence="5 6 8 9 13">Nucleus</location>
    </subcellularLocation>
</comment>
<comment type="domain">
    <text evidence="9 10 11 12">The C-terminal domain (724-998) alone is able to regulate gene expression (PubMed:19343174, PubMed:23355006, PubMed:26339297). The C-terminal domain (724-998) is required and sufficient to maintain high steady-state levels of both sense and antisense RNA transcripts of the tRNA gene-associated retrotransposon TRE5-A (PubMed:21076008).</text>
</comment>
<comment type="domain">
    <text evidence="5 9">A.T hook involved in DNA-binding is important for the gene regulatory function in vivo.</text>
</comment>
<keyword id="KW-0156">Chromatin regulator</keyword>
<keyword id="KW-0175">Coiled coil</keyword>
<keyword id="KW-0903">Direct protein sequencing</keyword>
<keyword id="KW-0238">DNA-binding</keyword>
<keyword id="KW-0254">Endocytosis</keyword>
<keyword id="KW-0479">Metal-binding</keyword>
<keyword id="KW-0539">Nucleus</keyword>
<keyword id="KW-0581">Phagocytosis</keyword>
<keyword id="KW-0804">Transcription</keyword>
<keyword id="KW-0805">Transcription regulation</keyword>
<keyword id="KW-0815">Transposition</keyword>
<keyword id="KW-0862">Zinc</keyword>
<keyword id="KW-0863">Zinc-finger</keyword>
<dbReference type="EMBL" id="AF052006">
    <property type="protein sequence ID" value="AAD17489.2"/>
    <property type="molecule type" value="Genomic_DNA"/>
</dbReference>
<dbReference type="EMBL" id="AAFI01000060">
    <property type="protein sequence ID" value="EAL67643.1"/>
    <property type="molecule type" value="Genomic_DNA"/>
</dbReference>
<dbReference type="RefSeq" id="XP_641715.1">
    <property type="nucleotide sequence ID" value="XM_636623.1"/>
</dbReference>
<dbReference type="STRING" id="44689.O97101"/>
<dbReference type="PaxDb" id="44689-DDB0216196"/>
<dbReference type="GeneID" id="8622125"/>
<dbReference type="KEGG" id="ddi:DDB_G0279409"/>
<dbReference type="dictyBase" id="DDB_G0279409">
    <property type="gene designation" value="cbfA"/>
</dbReference>
<dbReference type="VEuPathDB" id="AmoebaDB:DDB_G0279409"/>
<dbReference type="eggNOG" id="ENOG502RSTP">
    <property type="taxonomic scope" value="Eukaryota"/>
</dbReference>
<dbReference type="HOGENOM" id="CLU_299856_0_0_1"/>
<dbReference type="OMA" id="GCEFHFK"/>
<dbReference type="PhylomeDB" id="O97101"/>
<dbReference type="PRO" id="PR:O97101"/>
<dbReference type="GO" id="GO:0005634">
    <property type="term" value="C:nucleus"/>
    <property type="evidence" value="ECO:0000314"/>
    <property type="project" value="UniProtKB"/>
</dbReference>
<dbReference type="GO" id="GO:0003677">
    <property type="term" value="F:DNA binding"/>
    <property type="evidence" value="ECO:0000314"/>
    <property type="project" value="dictyBase"/>
</dbReference>
<dbReference type="GO" id="GO:0043565">
    <property type="term" value="F:sequence-specific DNA binding"/>
    <property type="evidence" value="ECO:0000314"/>
    <property type="project" value="UniProtKB"/>
</dbReference>
<dbReference type="GO" id="GO:0008270">
    <property type="term" value="F:zinc ion binding"/>
    <property type="evidence" value="ECO:0007669"/>
    <property type="project" value="UniProtKB-KW"/>
</dbReference>
<dbReference type="GO" id="GO:0031152">
    <property type="term" value="P:aggregation involved in sorocarp development"/>
    <property type="evidence" value="ECO:0000315"/>
    <property type="project" value="dictyBase"/>
</dbReference>
<dbReference type="GO" id="GO:0006325">
    <property type="term" value="P:chromatin organization"/>
    <property type="evidence" value="ECO:0007669"/>
    <property type="project" value="UniProtKB-KW"/>
</dbReference>
<dbReference type="GO" id="GO:0010629">
    <property type="term" value="P:negative regulation of gene expression"/>
    <property type="evidence" value="ECO:0000315"/>
    <property type="project" value="UniProtKB"/>
</dbReference>
<dbReference type="GO" id="GO:0006909">
    <property type="term" value="P:phagocytosis"/>
    <property type="evidence" value="ECO:0000315"/>
    <property type="project" value="dictyBase"/>
</dbReference>
<dbReference type="GO" id="GO:0006907">
    <property type="term" value="P:pinocytosis"/>
    <property type="evidence" value="ECO:0000315"/>
    <property type="project" value="dictyBase"/>
</dbReference>
<dbReference type="GO" id="GO:0010628">
    <property type="term" value="P:positive regulation of gene expression"/>
    <property type="evidence" value="ECO:0000315"/>
    <property type="project" value="UniProtKB"/>
</dbReference>
<dbReference type="GO" id="GO:0032196">
    <property type="term" value="P:transposition"/>
    <property type="evidence" value="ECO:0007669"/>
    <property type="project" value="UniProtKB-KW"/>
</dbReference>
<dbReference type="Gene3D" id="2.60.120.650">
    <property type="entry name" value="Cupin"/>
    <property type="match status" value="1"/>
</dbReference>
<dbReference type="InterPro" id="IPR003347">
    <property type="entry name" value="JmjC_dom"/>
</dbReference>
<dbReference type="InterPro" id="IPR018866">
    <property type="entry name" value="Znf-4CXXC_R1"/>
</dbReference>
<dbReference type="Pfam" id="PF02373">
    <property type="entry name" value="JmjC"/>
    <property type="match status" value="1"/>
</dbReference>
<dbReference type="Pfam" id="PF10497">
    <property type="entry name" value="zf-4CXXC_R1"/>
    <property type="match status" value="1"/>
</dbReference>
<dbReference type="SMART" id="SM00558">
    <property type="entry name" value="JmjC"/>
    <property type="match status" value="1"/>
</dbReference>
<dbReference type="SUPFAM" id="SSF51197">
    <property type="entry name" value="Clavaminate synthase-like"/>
    <property type="match status" value="1"/>
</dbReference>
<dbReference type="PROSITE" id="PS51184">
    <property type="entry name" value="JMJC"/>
    <property type="match status" value="1"/>
</dbReference>
<reference evidence="17" key="1">
    <citation type="journal article" date="1999" name="Eur. J. Biochem.">
        <title>A Dictyostelium protein binds to distinct oligo(dA) x oligo(dT) DNA sequences in the C-module of the retrotransposable element DRE.</title>
        <authorList>
            <person name="Horn J."/>
            <person name="Dietz-Schmidt A."/>
            <person name="Zundorf I."/>
            <person name="Garin J."/>
            <person name="Dingermann T."/>
            <person name="Winckler T."/>
        </authorList>
    </citation>
    <scope>NUCLEOTIDE SEQUENCE [GENOMIC DNA]</scope>
    <scope>PROTEIN SEQUENCE OF 4-21; 32-50; 88-103; 119-133; 205-235; 293-301 AND 968-975</scope>
    <scope>FUNCTION</scope>
    <scope>SUBCELLULAR LOCATION</scope>
    <scope>MUTAGENESIS OF ARG-812</scope>
    <source>
        <strain evidence="17">AX2</strain>
    </source>
</reference>
<reference evidence="18" key="2">
    <citation type="journal article" date="2005" name="Nature">
        <title>The genome of the social amoeba Dictyostelium discoideum.</title>
        <authorList>
            <person name="Eichinger L."/>
            <person name="Pachebat J.A."/>
            <person name="Gloeckner G."/>
            <person name="Rajandream M.A."/>
            <person name="Sucgang R."/>
            <person name="Berriman M."/>
            <person name="Song J."/>
            <person name="Olsen R."/>
            <person name="Szafranski K."/>
            <person name="Xu Q."/>
            <person name="Tunggal B."/>
            <person name="Kummerfeld S."/>
            <person name="Madera M."/>
            <person name="Konfortov B.A."/>
            <person name="Rivero F."/>
            <person name="Bankier A.T."/>
            <person name="Lehmann R."/>
            <person name="Hamlin N."/>
            <person name="Davies R."/>
            <person name="Gaudet P."/>
            <person name="Fey P."/>
            <person name="Pilcher K."/>
            <person name="Chen G."/>
            <person name="Saunders D."/>
            <person name="Sodergren E.J."/>
            <person name="Davis P."/>
            <person name="Kerhornou A."/>
            <person name="Nie X."/>
            <person name="Hall N."/>
            <person name="Anjard C."/>
            <person name="Hemphill L."/>
            <person name="Bason N."/>
            <person name="Farbrother P."/>
            <person name="Desany B."/>
            <person name="Just E."/>
            <person name="Morio T."/>
            <person name="Rost R."/>
            <person name="Churcher C.M."/>
            <person name="Cooper J."/>
            <person name="Haydock S."/>
            <person name="van Driessche N."/>
            <person name="Cronin A."/>
            <person name="Goodhead I."/>
            <person name="Muzny D.M."/>
            <person name="Mourier T."/>
            <person name="Pain A."/>
            <person name="Lu M."/>
            <person name="Harper D."/>
            <person name="Lindsay R."/>
            <person name="Hauser H."/>
            <person name="James K.D."/>
            <person name="Quiles M."/>
            <person name="Madan Babu M."/>
            <person name="Saito T."/>
            <person name="Buchrieser C."/>
            <person name="Wardroper A."/>
            <person name="Felder M."/>
            <person name="Thangavelu M."/>
            <person name="Johnson D."/>
            <person name="Knights A."/>
            <person name="Loulseged H."/>
            <person name="Mungall K.L."/>
            <person name="Oliver K."/>
            <person name="Price C."/>
            <person name="Quail M.A."/>
            <person name="Urushihara H."/>
            <person name="Hernandez J."/>
            <person name="Rabbinowitsch E."/>
            <person name="Steffen D."/>
            <person name="Sanders M."/>
            <person name="Ma J."/>
            <person name="Kohara Y."/>
            <person name="Sharp S."/>
            <person name="Simmonds M.N."/>
            <person name="Spiegler S."/>
            <person name="Tivey A."/>
            <person name="Sugano S."/>
            <person name="White B."/>
            <person name="Walker D."/>
            <person name="Woodward J.R."/>
            <person name="Winckler T."/>
            <person name="Tanaka Y."/>
            <person name="Shaulsky G."/>
            <person name="Schleicher M."/>
            <person name="Weinstock G.M."/>
            <person name="Rosenthal A."/>
            <person name="Cox E.C."/>
            <person name="Chisholm R.L."/>
            <person name="Gibbs R.A."/>
            <person name="Loomis W.F."/>
            <person name="Platzer M."/>
            <person name="Kay R.R."/>
            <person name="Williams J.G."/>
            <person name="Dear P.H."/>
            <person name="Noegel A.A."/>
            <person name="Barrell B.G."/>
            <person name="Kuspa A."/>
        </authorList>
    </citation>
    <scope>NUCLEOTIDE SEQUENCE [LARGE SCALE GENOMIC DNA]</scope>
    <source>
        <strain evidence="18">AX4</strain>
    </source>
</reference>
<reference key="3">
    <citation type="journal article" date="1996" name="Eur. J. Biochem.">
        <title>A nuclear protein factor binds specifically to the 3'-regulatory module of the long-interspersed-nuclear-element-like Dictyostelium repetitive element.</title>
        <authorList>
            <person name="Geier A."/>
            <person name="Horn J."/>
            <person name="Dingermann T."/>
            <person name="Winckler T."/>
        </authorList>
    </citation>
    <scope>FUNCTION</scope>
    <scope>SUBUNIT</scope>
    <scope>SUBCELLULAR LOCATION</scope>
</reference>
<reference key="4">
    <citation type="journal article" date="2001" name="J. Mol. Biol.">
        <title>Gene function analysis by amber stop codon suppression: CMBF is a nuclear protein that supports growth and development of Dictyostelium amoebae.</title>
        <authorList>
            <person name="Winckler T."/>
            <person name="Trautwein C."/>
            <person name="Tschepke C."/>
            <person name="Neuhaeuser C."/>
            <person name="Zuendorf I."/>
            <person name="Beck P."/>
            <person name="Vogel G."/>
            <person name="Dingermann T."/>
        </authorList>
    </citation>
    <scope>FUNCTION</scope>
    <scope>SUBCELLULAR LOCATION</scope>
</reference>
<reference key="5">
    <citation type="journal article" date="2004" name="Eukaryot. Cell">
        <title>CbfA, the C-module DNA-binding factor, plays an essential role in the initiation of Dictyostelium discoideum development.</title>
        <authorList>
            <person name="Winckler T."/>
            <person name="Iranfar N."/>
            <person name="Beck P."/>
            <person name="Jennes I."/>
            <person name="Siol O."/>
            <person name="Baik U."/>
            <person name="Loomis W.F."/>
            <person name="Dingermann T."/>
        </authorList>
    </citation>
    <scope>FUNCTION</scope>
</reference>
<reference key="6">
    <citation type="journal article" date="2006" name="Eukaryot. Cell">
        <title>The C-module DNA-binding factor mediates expression of the dictyostelium aggregation-specific adenylyl cyclase ACA.</title>
        <authorList>
            <person name="Siol O."/>
            <person name="Dingermann T."/>
            <person name="Winckler T."/>
        </authorList>
    </citation>
    <scope>FUNCTION</scope>
    <scope>SUBCELLULAR LOCATION</scope>
</reference>
<reference key="7">
    <citation type="journal article" date="2009" name="PLoS ONE">
        <title>The carboxy-terminal domain of Dictyostelium C-module-binding factor is an independent gene regulatory entity.</title>
        <authorList>
            <person name="Lucas J."/>
            <person name="Bilzer A."/>
            <person name="Moll L."/>
            <person name="Zuendorf I."/>
            <person name="Dingermann T."/>
            <person name="Eichinger L."/>
            <person name="Siol O."/>
            <person name="Winckler T."/>
        </authorList>
    </citation>
    <scope>FUNCTION</scope>
    <scope>SUBCELLULAR LOCATION</scope>
    <scope>DOMAIN</scope>
    <scope>MUTAGENESIS OF 1-MET--ASP-723; LYS-799; ARG-800; PRO-801; ARG-812 AND 999-ILE-ILE-1000</scope>
</reference>
<reference key="8">
    <citation type="journal article" date="2011" name="Eukaryot. Cell">
        <title>The C-module-binding factor supports amplification of TRE5-A retrotransposons in the Dictyostelium discoideum genome.</title>
        <authorList>
            <person name="Bilzer A."/>
            <person name="Doelz H."/>
            <person name="Reinhardt A."/>
            <person name="Schmith A."/>
            <person name="Siol O."/>
            <person name="Winckler T."/>
        </authorList>
    </citation>
    <scope>FUNCTION</scope>
    <scope>DOMAIN</scope>
</reference>
<reference key="9">
    <citation type="journal article" date="2013" name="Eukaryot. Cell">
        <title>Conserved gene regulatory function of the carboxy-terminal domain of dictyostelid C-module-binding factor.</title>
        <authorList>
            <person name="Schmith A."/>
            <person name="Groth M."/>
            <person name="Ratka J."/>
            <person name="Gatz S."/>
            <person name="Spaller T."/>
            <person name="Siol O."/>
            <person name="Gloeckner G."/>
            <person name="Winckler T."/>
        </authorList>
    </citation>
    <scope>FUNCTION</scope>
    <scope>DOMAIN</scope>
</reference>
<reference key="10">
    <citation type="journal article" date="2015" name="Mob. DNA">
        <title>A host factor supports retrotransposition of the TRE5-A population in Dictyostelium cells by suppressing an Argonaute protein.</title>
        <authorList>
            <person name="Schmith A."/>
            <person name="Spaller T."/>
            <person name="Gaube F."/>
            <person name="Fransson A."/>
            <person name="Boesler B."/>
            <person name="Ojha S."/>
            <person name="Nellen W."/>
            <person name="Hammann C."/>
            <person name="Soederbom F."/>
            <person name="Winckler T."/>
        </authorList>
    </citation>
    <scope>FUNCTION</scope>
    <scope>DOMAIN</scope>
</reference>
<gene>
    <name evidence="14 17" type="primary">cbfA</name>
    <name type="synonym">cbf</name>
    <name evidence="15" type="synonym">cmbF</name>
    <name type="ORF">DDB_G0279409</name>
</gene>
<organism evidence="17">
    <name type="scientific">Dictyostelium discoideum</name>
    <name type="common">Social amoeba</name>
    <dbReference type="NCBI Taxonomy" id="44689"/>
    <lineage>
        <taxon>Eukaryota</taxon>
        <taxon>Amoebozoa</taxon>
        <taxon>Evosea</taxon>
        <taxon>Eumycetozoa</taxon>
        <taxon>Dictyostelia</taxon>
        <taxon>Dictyosteliales</taxon>
        <taxon>Dictyosteliaceae</taxon>
        <taxon>Dictyostelium</taxon>
    </lineage>
</organism>
<name>CBFA_DICDI</name>
<proteinExistence type="evidence at protein level"/>
<feature type="chain" id="PRO_0000445586" description="C-module-binding factor A">
    <location>
        <begin position="1"/>
        <end position="1000"/>
    </location>
</feature>
<feature type="domain" description="JmjC" evidence="3">
    <location>
        <begin position="113"/>
        <end position="280"/>
    </location>
</feature>
<feature type="zinc finger region" description="PHD-type; atypical" evidence="1">
    <location>
        <begin position="489"/>
        <end position="544"/>
    </location>
</feature>
<feature type="zinc finger region" description="RING-type; degenerate" evidence="2">
    <location>
        <begin position="492"/>
        <end position="542"/>
    </location>
</feature>
<feature type="DNA-binding region" description="A.T hook" evidence="16">
    <location>
        <begin position="810"/>
        <end position="818"/>
    </location>
</feature>
<feature type="region of interest" description="Disordered" evidence="4">
    <location>
        <begin position="561"/>
        <end position="647"/>
    </location>
</feature>
<feature type="region of interest" description="Disordered" evidence="4">
    <location>
        <begin position="660"/>
        <end position="818"/>
    </location>
</feature>
<feature type="compositionally biased region" description="Low complexity" evidence="4">
    <location>
        <begin position="574"/>
        <end position="647"/>
    </location>
</feature>
<feature type="compositionally biased region" description="Low complexity" evidence="4">
    <location>
        <begin position="660"/>
        <end position="683"/>
    </location>
</feature>
<feature type="compositionally biased region" description="Low complexity" evidence="4">
    <location>
        <begin position="700"/>
        <end position="710"/>
    </location>
</feature>
<feature type="compositionally biased region" description="Low complexity" evidence="4">
    <location>
        <begin position="732"/>
        <end position="751"/>
    </location>
</feature>
<feature type="compositionally biased region" description="Low complexity" evidence="4">
    <location>
        <begin position="760"/>
        <end position="789"/>
    </location>
</feature>
<feature type="compositionally biased region" description="Basic and acidic residues" evidence="4">
    <location>
        <begin position="805"/>
        <end position="818"/>
    </location>
</feature>
<feature type="mutagenesis site" description="Present in the cytoplasm but also accumulates in the nucleus, and a decreased ability to regulate gene expression; when associated with N-799; G-800 and 999-I-I-1000. Accummulates in the nucleus, and a full ability to regulate gene expression; when associated with K-801 and 999-I-I-1000. Accummulates in the nucleus, but a decreased ability to regulate gene expression; when associated with K-801; A-812 and 999-I-I-1000. A significantly high amount present in the cytoplasm in addition to nucleus, and a decreased ability to regulate gene expression; when associated with A-812 and 999-I-I-1000." evidence="9">
    <location>
        <begin position="1"/>
        <end position="723"/>
    </location>
</feature>
<feature type="mutagenesis site" description="Present in the cytoplasm but also accumulates in the nucleus, and a decreased ability to regulate gene expression; when associated with 1-M--D-723; G-800 and 999-I-I-1000." evidence="9">
    <original>K</original>
    <variation>N</variation>
    <location>
        <position position="799"/>
    </location>
</feature>
<feature type="mutagenesis site" description="Present in the cytoplasm but also accumulates in the nucleus, and a decreased ability to regulate gene expression; when associated with 1-M--D-723; N-799 and 999-I-I-1000." evidence="9">
    <original>R</original>
    <variation>G</variation>
    <location>
        <position position="800"/>
    </location>
</feature>
<feature type="mutagenesis site" description="Accummulates in the nucleus, and a full ability to regulate gene expression; when associated with 1-M--D-723 and 999-I-I-1000. Accummulates in the nucleus, but a decreased ability to regulate gene expression; when associated with 1-M--D-723; A-812 and 999-I-I-1000." evidence="9">
    <original>P</original>
    <variation>K</variation>
    <location>
        <position position="801"/>
    </location>
</feature>
<feature type="mutagenesis site" description="Loss of the interaction with promoter of the C-module of the tRNA gene-associated retrotransposon TRE5-A. Accummulates in the nucleus, but a decreased ability to regulate gene expression; when associated with 1-M--D-723; K-801 and 999-I-I-1000. A significantly high amount present in the cytoplasm in addition to nucleus, and a decreased ability to regulate gene expression; when associated with 1-M--D-723 and 999-I-I-1000." evidence="5 9">
    <original>R</original>
    <variation>A</variation>
    <location>
        <position position="812"/>
    </location>
</feature>
<feature type="mutagenesis site" description="Present in the cytoplasm but also accumulates in the nucleus, and a decreased ability to regulate gene expression; when associated with 1-M--D-723; N-799 and G-800. Accummulates in the nucleus, and a full ability to regulate gene expression; when associated with 1-M--D-723 and K-801. Accummulates in the nucleus, but a decreased ability to regulate gene expression; when associated with 1-M--D-723; K-801 and A-812. A significantly high amount present in the cytoplasm in addition to nucleus, and a decreased ability to regulate gene expression; when associated with 1-M--D-723 and A-812." evidence="9">
    <location>
        <begin position="999"/>
        <end position="1000"/>
    </location>
</feature>